<evidence type="ECO:0000250" key="1"/>
<evidence type="ECO:0000250" key="2">
    <source>
        <dbReference type="UniProtKB" id="Q9Y4L1"/>
    </source>
</evidence>
<evidence type="ECO:0000255" key="3"/>
<evidence type="ECO:0000256" key="4">
    <source>
        <dbReference type="SAM" id="MobiDB-lite"/>
    </source>
</evidence>
<evidence type="ECO:0000305" key="5"/>
<keyword id="KW-0067">ATP-binding</keyword>
<keyword id="KW-0143">Chaperone</keyword>
<keyword id="KW-0256">Endoplasmic reticulum</keyword>
<keyword id="KW-0547">Nucleotide-binding</keyword>
<keyword id="KW-1185">Reference proteome</keyword>
<keyword id="KW-0732">Signal</keyword>
<protein>
    <recommendedName>
        <fullName>Hypoxia up-regulated protein 1</fullName>
    </recommendedName>
</protein>
<reference key="1">
    <citation type="submission" date="2004-06" db="EMBL/GenBank/DDBJ databases">
        <authorList>
            <consortium name="NIH - Zebrafish Gene Collection (ZGC) project"/>
        </authorList>
    </citation>
    <scope>NUCLEOTIDE SEQUENCE [LARGE SCALE MRNA]</scope>
    <source>
        <strain>AB</strain>
        <tissue>Embryo</tissue>
    </source>
</reference>
<name>HYOU1_DANRE</name>
<organism>
    <name type="scientific">Danio rerio</name>
    <name type="common">Zebrafish</name>
    <name type="synonym">Brachydanio rerio</name>
    <dbReference type="NCBI Taxonomy" id="7955"/>
    <lineage>
        <taxon>Eukaryota</taxon>
        <taxon>Metazoa</taxon>
        <taxon>Chordata</taxon>
        <taxon>Craniata</taxon>
        <taxon>Vertebrata</taxon>
        <taxon>Euteleostomi</taxon>
        <taxon>Actinopterygii</taxon>
        <taxon>Neopterygii</taxon>
        <taxon>Teleostei</taxon>
        <taxon>Ostariophysi</taxon>
        <taxon>Cypriniformes</taxon>
        <taxon>Danionidae</taxon>
        <taxon>Danioninae</taxon>
        <taxon>Danio</taxon>
    </lineage>
</organism>
<feature type="signal peptide" evidence="3">
    <location>
        <begin position="1"/>
        <end position="24"/>
    </location>
</feature>
<feature type="chain" id="PRO_0000379421" description="Hypoxia up-regulated protein 1">
    <location>
        <begin position="25"/>
        <end position="980"/>
    </location>
</feature>
<feature type="region of interest" description="Disordered" evidence="4">
    <location>
        <begin position="558"/>
        <end position="682"/>
    </location>
</feature>
<feature type="region of interest" description="Disordered" evidence="4">
    <location>
        <begin position="894"/>
        <end position="980"/>
    </location>
</feature>
<feature type="short sequence motif" description="Prevents secretion from ER" evidence="3">
    <location>
        <begin position="977"/>
        <end position="980"/>
    </location>
</feature>
<feature type="compositionally biased region" description="Basic and acidic residues" evidence="4">
    <location>
        <begin position="599"/>
        <end position="656"/>
    </location>
</feature>
<feature type="compositionally biased region" description="Basic and acidic residues" evidence="4">
    <location>
        <begin position="896"/>
        <end position="906"/>
    </location>
</feature>
<feature type="compositionally biased region" description="Polar residues" evidence="4">
    <location>
        <begin position="907"/>
        <end position="916"/>
    </location>
</feature>
<feature type="compositionally biased region" description="Basic and acidic residues" evidence="4">
    <location>
        <begin position="918"/>
        <end position="949"/>
    </location>
</feature>
<feature type="compositionally biased region" description="Basic and acidic residues" evidence="4">
    <location>
        <begin position="960"/>
        <end position="980"/>
    </location>
</feature>
<feature type="sequence conflict" description="In Ref. 1; AAH71372." evidence="5" ref="1">
    <original>A</original>
    <variation>T</variation>
    <location>
        <position position="599"/>
    </location>
</feature>
<feature type="sequence conflict" description="In Ref. 1; AAH71372." evidence="5" ref="1">
    <original>D</original>
    <variation>E</variation>
    <location>
        <position position="635"/>
    </location>
</feature>
<sequence length="980" mass="110320">MREKLSLWAIFCLVVAFLPSQTESVAVMSVDLGSEWMKVAIVKPGVPMEIVLNKESRRKTPVAVCLKENERLFGDGALGVAVKNPKVVYRFLQSILGKTADNPQVAEYQKHFPEHQLQKDEKRGTVYFKFSEEMQYTPEELLGMILNYSRTLAQDFAEQPIKDAVITVPAYFNQAERRAVLQAAHIAGLKVLQLINDNTAVALNYGVFRRKDINSTAQNIMFYDMGSGSTTATIVTYQTVKTKESGTQPQLQIRGVGFDRTLGGFEMELRLRDHLAKLFNEQKKSKKDVRDNLRAMAKLLKEAQRLKTVLSANAEHTAQIEGLMDDIDFKAKVTRSEFEALCEDLFDRVPGPVKQALAAAEMSMDEIEQVILVGGATRVPKVQDVLLKSVGKEELSKNINADEAAAMGAVYQAAALSKAFKVKPFLVRDAAVFPIQVEFSRETEEEDGVKSLKHNKRILFQRMAPYPQRKVITFNRYIDDFVFYINYGDLSFLSEQDMKVFGSQNLTTVKLSGVGSSFKKHSDAESKGIKAHFNMDESGVLILDRVESVFETIVEEKEEESTLTKLGNTISSLFGGGSSEPSANVTEPVTDEEEVTPEAGKEQDQPEKQEETVQEKPETEEGKEAEPQAEEQKEDKEKAENQGETESEKTEKPEEKTTDEEKEADMKPKLQKKSKISADIAVELEVNDVLDPSAEDMEGSKKKLQDLTDRDLEKQEREKTLNSLEAFIFETQDKLYQDEYQAVVTEEEKEQISGRLSVASSWMDEEGYRAGTKLLKEKLSELKKLCKGMFFRVEERKKWPDRLAALDSMLNHSNIFLKSARLIPESDQIFTDVELKTLEKVINETITWKNETVAEQEKLSPTVKPVLLSKDIEAKLSLLDREVNYLLNKAKFAKPKPKDKAKDKNSTSESSKANSTDDAEKVIPPKTEDGAEKVKPAEEPPVVEEKAEETILELNPAENTDDKTESTESSKSENHIEDEL</sequence>
<dbReference type="EMBL" id="BC047807">
    <property type="protein sequence ID" value="AAH47807.1"/>
    <property type="molecule type" value="mRNA"/>
</dbReference>
<dbReference type="EMBL" id="BC071372">
    <property type="protein sequence ID" value="AAH71372.1"/>
    <property type="status" value="ALT_TERM"/>
    <property type="molecule type" value="mRNA"/>
</dbReference>
<dbReference type="RefSeq" id="NP_997868.1">
    <property type="nucleotide sequence ID" value="NM_212703.1"/>
</dbReference>
<dbReference type="SMR" id="Q7ZUW2"/>
<dbReference type="FunCoup" id="Q7ZUW2">
    <property type="interactions" value="3025"/>
</dbReference>
<dbReference type="STRING" id="7955.ENSDARP00000090804"/>
<dbReference type="PaxDb" id="7955-ENSDARP00000090804"/>
<dbReference type="PeptideAtlas" id="Q7ZUW2"/>
<dbReference type="GeneID" id="327133"/>
<dbReference type="KEGG" id="dre:327133"/>
<dbReference type="AGR" id="ZFIN:ZDB-GENE-030131-5344"/>
<dbReference type="CTD" id="10525"/>
<dbReference type="ZFIN" id="ZDB-GENE-030131-5344">
    <property type="gene designation" value="hyou1"/>
</dbReference>
<dbReference type="eggNOG" id="KOG0104">
    <property type="taxonomic scope" value="Eukaryota"/>
</dbReference>
<dbReference type="InParanoid" id="Q7ZUW2"/>
<dbReference type="OrthoDB" id="10262720at2759"/>
<dbReference type="PhylomeDB" id="Q7ZUW2"/>
<dbReference type="PRO" id="PR:Q7ZUW2"/>
<dbReference type="Proteomes" id="UP000000437">
    <property type="component" value="Chromosome 10"/>
</dbReference>
<dbReference type="GO" id="GO:0034663">
    <property type="term" value="C:endoplasmic reticulum chaperone complex"/>
    <property type="evidence" value="ECO:0000318"/>
    <property type="project" value="GO_Central"/>
</dbReference>
<dbReference type="GO" id="GO:0005788">
    <property type="term" value="C:endoplasmic reticulum lumen"/>
    <property type="evidence" value="ECO:0007669"/>
    <property type="project" value="UniProtKB-SubCell"/>
</dbReference>
<dbReference type="GO" id="GO:0000774">
    <property type="term" value="F:adenyl-nucleotide exchange factor activity"/>
    <property type="evidence" value="ECO:0000318"/>
    <property type="project" value="GO_Central"/>
</dbReference>
<dbReference type="GO" id="GO:0005524">
    <property type="term" value="F:ATP binding"/>
    <property type="evidence" value="ECO:0007669"/>
    <property type="project" value="UniProtKB-KW"/>
</dbReference>
<dbReference type="GO" id="GO:0140662">
    <property type="term" value="F:ATP-dependent protein folding chaperone"/>
    <property type="evidence" value="ECO:0007669"/>
    <property type="project" value="InterPro"/>
</dbReference>
<dbReference type="GO" id="GO:1903298">
    <property type="term" value="P:negative regulation of hypoxia-induced intrinsic apoptotic signaling pathway"/>
    <property type="evidence" value="ECO:0000318"/>
    <property type="project" value="GO_Central"/>
</dbReference>
<dbReference type="CDD" id="cd10230">
    <property type="entry name" value="ASKHA_NBD_HSP70_HYOU1"/>
    <property type="match status" value="1"/>
</dbReference>
<dbReference type="FunFam" id="1.20.1270.10:FF:000013">
    <property type="entry name" value="Hypoxia up-regulated protein 1"/>
    <property type="match status" value="1"/>
</dbReference>
<dbReference type="FunFam" id="2.60.34.10:FF:000009">
    <property type="entry name" value="Hypoxia up-regulated protein 1"/>
    <property type="match status" value="1"/>
</dbReference>
<dbReference type="FunFam" id="3.90.640.10:FF:000012">
    <property type="entry name" value="Hypoxia up-regulated protein 1"/>
    <property type="match status" value="1"/>
</dbReference>
<dbReference type="FunFam" id="3.30.30.30:FF:000004">
    <property type="entry name" value="hypoxia up-regulated protein 1"/>
    <property type="match status" value="1"/>
</dbReference>
<dbReference type="Gene3D" id="1.20.1270.10">
    <property type="match status" value="1"/>
</dbReference>
<dbReference type="Gene3D" id="3.30.30.30">
    <property type="match status" value="1"/>
</dbReference>
<dbReference type="Gene3D" id="3.30.420.40">
    <property type="match status" value="2"/>
</dbReference>
<dbReference type="Gene3D" id="3.90.640.10">
    <property type="entry name" value="Actin, Chain A, domain 4"/>
    <property type="match status" value="1"/>
</dbReference>
<dbReference type="Gene3D" id="2.60.34.10">
    <property type="entry name" value="Substrate Binding Domain Of DNAk, Chain A, domain 1"/>
    <property type="match status" value="1"/>
</dbReference>
<dbReference type="InterPro" id="IPR043129">
    <property type="entry name" value="ATPase_NBD"/>
</dbReference>
<dbReference type="InterPro" id="IPR018181">
    <property type="entry name" value="Heat_shock_70_CS"/>
</dbReference>
<dbReference type="InterPro" id="IPR029048">
    <property type="entry name" value="HSP70_C_sf"/>
</dbReference>
<dbReference type="InterPro" id="IPR029047">
    <property type="entry name" value="HSP70_peptide-bd_sf"/>
</dbReference>
<dbReference type="InterPro" id="IPR013126">
    <property type="entry name" value="Hsp_70_fam"/>
</dbReference>
<dbReference type="PANTHER" id="PTHR45639">
    <property type="entry name" value="HSC70CB, ISOFORM G-RELATED"/>
    <property type="match status" value="1"/>
</dbReference>
<dbReference type="PANTHER" id="PTHR45639:SF3">
    <property type="entry name" value="HYPOXIA UP-REGULATED PROTEIN 1"/>
    <property type="match status" value="1"/>
</dbReference>
<dbReference type="Pfam" id="PF00012">
    <property type="entry name" value="HSP70"/>
    <property type="match status" value="1"/>
</dbReference>
<dbReference type="PRINTS" id="PR00301">
    <property type="entry name" value="HEATSHOCK70"/>
</dbReference>
<dbReference type="SUPFAM" id="SSF53067">
    <property type="entry name" value="Actin-like ATPase domain"/>
    <property type="match status" value="2"/>
</dbReference>
<dbReference type="SUPFAM" id="SSF100934">
    <property type="entry name" value="Heat shock protein 70kD (HSP70), C-terminal subdomain"/>
    <property type="match status" value="1"/>
</dbReference>
<dbReference type="PROSITE" id="PS00329">
    <property type="entry name" value="HSP70_2"/>
    <property type="match status" value="1"/>
</dbReference>
<dbReference type="PROSITE" id="PS01036">
    <property type="entry name" value="HSP70_3"/>
    <property type="match status" value="1"/>
</dbReference>
<comment type="function">
    <text evidence="1">Has a pivotal role in cytoprotective cellular mechanisms triggered by oxygen deprivation. May play a role as a molecular chaperone and participate in protein folding.</text>
</comment>
<comment type="subcellular location">
    <subcellularLocation>
        <location evidence="1">Endoplasmic reticulum lumen</location>
    </subcellularLocation>
</comment>
<comment type="similarity">
    <text evidence="5">Belongs to the heat shock protein 70 family.</text>
</comment>
<accession>Q7ZUW2</accession>
<accession>Q6IQN2</accession>
<gene>
    <name type="primary">hyou1</name>
    <name evidence="2" type="synonym">hsph4</name>
</gene>
<proteinExistence type="evidence at transcript level"/>